<feature type="chain" id="PRO_1000001344" description="LexA repressor">
    <location>
        <begin position="1"/>
        <end position="202"/>
    </location>
</feature>
<feature type="DNA-binding region" description="H-T-H motif" evidence="1">
    <location>
        <begin position="28"/>
        <end position="48"/>
    </location>
</feature>
<feature type="active site" description="For autocatalytic cleavage activity" evidence="1">
    <location>
        <position position="119"/>
    </location>
</feature>
<feature type="active site" description="For autocatalytic cleavage activity" evidence="1">
    <location>
        <position position="156"/>
    </location>
</feature>
<feature type="site" description="Cleavage; by autolysis" evidence="1">
    <location>
        <begin position="84"/>
        <end position="85"/>
    </location>
</feature>
<accession>Q327V0</accession>
<reference key="1">
    <citation type="journal article" date="2005" name="Nucleic Acids Res.">
        <title>Genome dynamics and diversity of Shigella species, the etiologic agents of bacillary dysentery.</title>
        <authorList>
            <person name="Yang F."/>
            <person name="Yang J."/>
            <person name="Zhang X."/>
            <person name="Chen L."/>
            <person name="Jiang Y."/>
            <person name="Yan Y."/>
            <person name="Tang X."/>
            <person name="Wang J."/>
            <person name="Xiong Z."/>
            <person name="Dong J."/>
            <person name="Xue Y."/>
            <person name="Zhu Y."/>
            <person name="Xu X."/>
            <person name="Sun L."/>
            <person name="Chen S."/>
            <person name="Nie H."/>
            <person name="Peng J."/>
            <person name="Xu J."/>
            <person name="Wang Y."/>
            <person name="Yuan Z."/>
            <person name="Wen Y."/>
            <person name="Yao Z."/>
            <person name="Shen Y."/>
            <person name="Qiang B."/>
            <person name="Hou Y."/>
            <person name="Yu J."/>
            <person name="Jin Q."/>
        </authorList>
    </citation>
    <scope>NUCLEOTIDE SEQUENCE [LARGE SCALE GENOMIC DNA]</scope>
    <source>
        <strain>Sd197</strain>
    </source>
</reference>
<comment type="function">
    <text evidence="1">Represses a number of genes involved in the response to DNA damage (SOS response), including recA and lexA. Binds to the 16 bp palindromic sequence 5'-CTGTATATATATACAG-3'. In the presence of single-stranded DNA, RecA interacts with LexA causing an autocatalytic cleavage which disrupts the DNA-binding part of LexA, leading to derepression of the SOS regulon and eventually DNA repair.</text>
</comment>
<comment type="catalytic activity">
    <reaction evidence="1">
        <text>Hydrolysis of Ala-|-Gly bond in repressor LexA.</text>
        <dbReference type="EC" id="3.4.21.88"/>
    </reaction>
</comment>
<comment type="subunit">
    <text evidence="1">Homodimer.</text>
</comment>
<comment type="similarity">
    <text evidence="1">Belongs to the peptidase S24 family.</text>
</comment>
<gene>
    <name evidence="1" type="primary">lexA</name>
    <name type="ordered locus">SDY_4531</name>
</gene>
<proteinExistence type="inferred from homology"/>
<protein>
    <recommendedName>
        <fullName evidence="1">LexA repressor</fullName>
        <ecNumber evidence="1">3.4.21.88</ecNumber>
    </recommendedName>
</protein>
<organism>
    <name type="scientific">Shigella dysenteriae serotype 1 (strain Sd197)</name>
    <dbReference type="NCBI Taxonomy" id="300267"/>
    <lineage>
        <taxon>Bacteria</taxon>
        <taxon>Pseudomonadati</taxon>
        <taxon>Pseudomonadota</taxon>
        <taxon>Gammaproteobacteria</taxon>
        <taxon>Enterobacterales</taxon>
        <taxon>Enterobacteriaceae</taxon>
        <taxon>Shigella</taxon>
    </lineage>
</organism>
<sequence length="202" mass="22358">MKALTARQQEVFDLIRDHISQTGMPPTRAEIAQRLGFRSPNAAEEHLKALARKGVIEIVSGASRGIRLLQEEEEGLPLVGRVAAGEPLLAQQHIEGHYQVDPSLFKPNADFLLRVSGMSMKDIGIMDGDLLAVHKTQDVRNGQVVVARIDDEVTVKRLKKQGNKVELLPENSEFKPIVVDLRQQSFTIEGLAVGVIRNGDWL</sequence>
<evidence type="ECO:0000255" key="1">
    <source>
        <dbReference type="HAMAP-Rule" id="MF_00015"/>
    </source>
</evidence>
<keyword id="KW-0068">Autocatalytic cleavage</keyword>
<keyword id="KW-0227">DNA damage</keyword>
<keyword id="KW-0234">DNA repair</keyword>
<keyword id="KW-0235">DNA replication</keyword>
<keyword id="KW-0238">DNA-binding</keyword>
<keyword id="KW-0378">Hydrolase</keyword>
<keyword id="KW-1185">Reference proteome</keyword>
<keyword id="KW-0678">Repressor</keyword>
<keyword id="KW-0742">SOS response</keyword>
<keyword id="KW-0804">Transcription</keyword>
<keyword id="KW-0805">Transcription regulation</keyword>
<name>LEXA_SHIDS</name>
<dbReference type="EC" id="3.4.21.88" evidence="1"/>
<dbReference type="EMBL" id="CP000034">
    <property type="protein sequence ID" value="ABB64405.1"/>
    <property type="molecule type" value="Genomic_DNA"/>
</dbReference>
<dbReference type="RefSeq" id="WP_000646078.1">
    <property type="nucleotide sequence ID" value="NC_007606.1"/>
</dbReference>
<dbReference type="RefSeq" id="YP_405896.1">
    <property type="nucleotide sequence ID" value="NC_007606.1"/>
</dbReference>
<dbReference type="SMR" id="Q327V0"/>
<dbReference type="STRING" id="300267.SDY_4531"/>
<dbReference type="MEROPS" id="S24.001"/>
<dbReference type="EnsemblBacteria" id="ABB64405">
    <property type="protein sequence ID" value="ABB64405"/>
    <property type="gene ID" value="SDY_4531"/>
</dbReference>
<dbReference type="GeneID" id="93777788"/>
<dbReference type="KEGG" id="sdy:SDY_4531"/>
<dbReference type="PATRIC" id="fig|300267.13.peg.5355"/>
<dbReference type="HOGENOM" id="CLU_066192_45_3_6"/>
<dbReference type="Proteomes" id="UP000002716">
    <property type="component" value="Chromosome"/>
</dbReference>
<dbReference type="GO" id="GO:0003677">
    <property type="term" value="F:DNA binding"/>
    <property type="evidence" value="ECO:0007669"/>
    <property type="project" value="UniProtKB-UniRule"/>
</dbReference>
<dbReference type="GO" id="GO:0004252">
    <property type="term" value="F:serine-type endopeptidase activity"/>
    <property type="evidence" value="ECO:0007669"/>
    <property type="project" value="UniProtKB-UniRule"/>
</dbReference>
<dbReference type="GO" id="GO:0006281">
    <property type="term" value="P:DNA repair"/>
    <property type="evidence" value="ECO:0007669"/>
    <property type="project" value="UniProtKB-UniRule"/>
</dbReference>
<dbReference type="GO" id="GO:0006260">
    <property type="term" value="P:DNA replication"/>
    <property type="evidence" value="ECO:0007669"/>
    <property type="project" value="UniProtKB-UniRule"/>
</dbReference>
<dbReference type="GO" id="GO:0045892">
    <property type="term" value="P:negative regulation of DNA-templated transcription"/>
    <property type="evidence" value="ECO:0007669"/>
    <property type="project" value="UniProtKB-UniRule"/>
</dbReference>
<dbReference type="GO" id="GO:0006508">
    <property type="term" value="P:proteolysis"/>
    <property type="evidence" value="ECO:0007669"/>
    <property type="project" value="InterPro"/>
</dbReference>
<dbReference type="GO" id="GO:0009432">
    <property type="term" value="P:SOS response"/>
    <property type="evidence" value="ECO:0007669"/>
    <property type="project" value="UniProtKB-UniRule"/>
</dbReference>
<dbReference type="CDD" id="cd06529">
    <property type="entry name" value="S24_LexA-like"/>
    <property type="match status" value="1"/>
</dbReference>
<dbReference type="FunFam" id="1.10.10.10:FF:000009">
    <property type="entry name" value="LexA repressor"/>
    <property type="match status" value="1"/>
</dbReference>
<dbReference type="FunFam" id="2.10.109.10:FF:000001">
    <property type="entry name" value="LexA repressor"/>
    <property type="match status" value="1"/>
</dbReference>
<dbReference type="Gene3D" id="2.10.109.10">
    <property type="entry name" value="Umud Fragment, subunit A"/>
    <property type="match status" value="1"/>
</dbReference>
<dbReference type="Gene3D" id="1.10.10.10">
    <property type="entry name" value="Winged helix-like DNA-binding domain superfamily/Winged helix DNA-binding domain"/>
    <property type="match status" value="1"/>
</dbReference>
<dbReference type="HAMAP" id="MF_00015">
    <property type="entry name" value="LexA"/>
    <property type="match status" value="1"/>
</dbReference>
<dbReference type="InterPro" id="IPR006200">
    <property type="entry name" value="LexA"/>
</dbReference>
<dbReference type="InterPro" id="IPR039418">
    <property type="entry name" value="LexA-like"/>
</dbReference>
<dbReference type="InterPro" id="IPR036286">
    <property type="entry name" value="LexA/Signal_pep-like_sf"/>
</dbReference>
<dbReference type="InterPro" id="IPR006199">
    <property type="entry name" value="LexA_DNA-bd_dom"/>
</dbReference>
<dbReference type="InterPro" id="IPR050077">
    <property type="entry name" value="LexA_repressor"/>
</dbReference>
<dbReference type="InterPro" id="IPR006197">
    <property type="entry name" value="Peptidase_S24_LexA"/>
</dbReference>
<dbReference type="InterPro" id="IPR015927">
    <property type="entry name" value="Peptidase_S24_S26A/B/C"/>
</dbReference>
<dbReference type="InterPro" id="IPR036388">
    <property type="entry name" value="WH-like_DNA-bd_sf"/>
</dbReference>
<dbReference type="InterPro" id="IPR036390">
    <property type="entry name" value="WH_DNA-bd_sf"/>
</dbReference>
<dbReference type="NCBIfam" id="TIGR00498">
    <property type="entry name" value="lexA"/>
    <property type="match status" value="1"/>
</dbReference>
<dbReference type="PANTHER" id="PTHR33516">
    <property type="entry name" value="LEXA REPRESSOR"/>
    <property type="match status" value="1"/>
</dbReference>
<dbReference type="PANTHER" id="PTHR33516:SF2">
    <property type="entry name" value="LEXA REPRESSOR-RELATED"/>
    <property type="match status" value="1"/>
</dbReference>
<dbReference type="Pfam" id="PF01726">
    <property type="entry name" value="LexA_DNA_bind"/>
    <property type="match status" value="1"/>
</dbReference>
<dbReference type="Pfam" id="PF00717">
    <property type="entry name" value="Peptidase_S24"/>
    <property type="match status" value="1"/>
</dbReference>
<dbReference type="PRINTS" id="PR00726">
    <property type="entry name" value="LEXASERPTASE"/>
</dbReference>
<dbReference type="SUPFAM" id="SSF51306">
    <property type="entry name" value="LexA/Signal peptidase"/>
    <property type="match status" value="1"/>
</dbReference>
<dbReference type="SUPFAM" id="SSF46785">
    <property type="entry name" value="Winged helix' DNA-binding domain"/>
    <property type="match status" value="1"/>
</dbReference>